<protein>
    <recommendedName>
        <fullName>LOB domain-containing protein 29</fullName>
    </recommendedName>
    <alternativeName>
        <fullName>ASYMMETRIC LEAVES 2-like protein 16</fullName>
        <shortName>AS2-like protein 16</shortName>
    </alternativeName>
</protein>
<name>LBD29_ARATH</name>
<proteinExistence type="evidence at transcript level"/>
<reference key="1">
    <citation type="journal article" date="2002" name="Plant Physiol.">
        <title>The LATERAL ORGAN BOUNDARIES gene defines a novel, plant-specific gene family.</title>
        <authorList>
            <person name="Shuai B."/>
            <person name="Reynaga-Pena C.G."/>
            <person name="Springer P.S."/>
        </authorList>
    </citation>
    <scope>NUCLEOTIDE SEQUENCE [MRNA]</scope>
    <scope>TISSUE SPECIFICITY</scope>
    <scope>GENE FAMILY</scope>
    <scope>NOMENCLATURE</scope>
    <source>
        <strain>cv. Columbia</strain>
    </source>
</reference>
<reference key="2">
    <citation type="journal article" date="2009" name="Plant J.">
        <title>Characterization of genes in the ASYMMETRIC LEAVES2/LATERAL ORGAN BOUNDARIES (AS2/LOB) family in Arabidopsis thaliana, and functional and molecular comparisons between AS2 and other family members.</title>
        <authorList>
            <person name="Matsumura Y."/>
            <person name="Iwakawa H."/>
            <person name="Machida Y."/>
            <person name="Machida C."/>
        </authorList>
    </citation>
    <scope>NUCLEOTIDE SEQUENCE [MRNA]</scope>
    <source>
        <strain>cv. Columbia</strain>
    </source>
</reference>
<reference key="3">
    <citation type="journal article" date="2000" name="Nature">
        <title>Sequence and analysis of chromosome 3 of the plant Arabidopsis thaliana.</title>
        <authorList>
            <person name="Salanoubat M."/>
            <person name="Lemcke K."/>
            <person name="Rieger M."/>
            <person name="Ansorge W."/>
            <person name="Unseld M."/>
            <person name="Fartmann B."/>
            <person name="Valle G."/>
            <person name="Bloecker H."/>
            <person name="Perez-Alonso M."/>
            <person name="Obermaier B."/>
            <person name="Delseny M."/>
            <person name="Boutry M."/>
            <person name="Grivell L.A."/>
            <person name="Mache R."/>
            <person name="Puigdomenech P."/>
            <person name="De Simone V."/>
            <person name="Choisne N."/>
            <person name="Artiguenave F."/>
            <person name="Robert C."/>
            <person name="Brottier P."/>
            <person name="Wincker P."/>
            <person name="Cattolico L."/>
            <person name="Weissenbach J."/>
            <person name="Saurin W."/>
            <person name="Quetier F."/>
            <person name="Schaefer M."/>
            <person name="Mueller-Auer S."/>
            <person name="Gabel C."/>
            <person name="Fuchs M."/>
            <person name="Benes V."/>
            <person name="Wurmbach E."/>
            <person name="Drzonek H."/>
            <person name="Erfle H."/>
            <person name="Jordan N."/>
            <person name="Bangert S."/>
            <person name="Wiedelmann R."/>
            <person name="Kranz H."/>
            <person name="Voss H."/>
            <person name="Holland R."/>
            <person name="Brandt P."/>
            <person name="Nyakatura G."/>
            <person name="Vezzi A."/>
            <person name="D'Angelo M."/>
            <person name="Pallavicini A."/>
            <person name="Toppo S."/>
            <person name="Simionati B."/>
            <person name="Conrad A."/>
            <person name="Hornischer K."/>
            <person name="Kauer G."/>
            <person name="Loehnert T.-H."/>
            <person name="Nordsiek G."/>
            <person name="Reichelt J."/>
            <person name="Scharfe M."/>
            <person name="Schoen O."/>
            <person name="Bargues M."/>
            <person name="Terol J."/>
            <person name="Climent J."/>
            <person name="Navarro P."/>
            <person name="Collado C."/>
            <person name="Perez-Perez A."/>
            <person name="Ottenwaelder B."/>
            <person name="Duchemin D."/>
            <person name="Cooke R."/>
            <person name="Laudie M."/>
            <person name="Berger-Llauro C."/>
            <person name="Purnelle B."/>
            <person name="Masuy D."/>
            <person name="de Haan M."/>
            <person name="Maarse A.C."/>
            <person name="Alcaraz J.-P."/>
            <person name="Cottet A."/>
            <person name="Casacuberta E."/>
            <person name="Monfort A."/>
            <person name="Argiriou A."/>
            <person name="Flores M."/>
            <person name="Liguori R."/>
            <person name="Vitale D."/>
            <person name="Mannhaupt G."/>
            <person name="Haase D."/>
            <person name="Schoof H."/>
            <person name="Rudd S."/>
            <person name="Zaccaria P."/>
            <person name="Mewes H.-W."/>
            <person name="Mayer K.F.X."/>
            <person name="Kaul S."/>
            <person name="Town C.D."/>
            <person name="Koo H.L."/>
            <person name="Tallon L.J."/>
            <person name="Jenkins J."/>
            <person name="Rooney T."/>
            <person name="Rizzo M."/>
            <person name="Walts A."/>
            <person name="Utterback T."/>
            <person name="Fujii C.Y."/>
            <person name="Shea T.P."/>
            <person name="Creasy T.H."/>
            <person name="Haas B."/>
            <person name="Maiti R."/>
            <person name="Wu D."/>
            <person name="Peterson J."/>
            <person name="Van Aken S."/>
            <person name="Pai G."/>
            <person name="Militscher J."/>
            <person name="Sellers P."/>
            <person name="Gill J.E."/>
            <person name="Feldblyum T.V."/>
            <person name="Preuss D."/>
            <person name="Lin X."/>
            <person name="Nierman W.C."/>
            <person name="Salzberg S.L."/>
            <person name="White O."/>
            <person name="Venter J.C."/>
            <person name="Fraser C.M."/>
            <person name="Kaneko T."/>
            <person name="Nakamura Y."/>
            <person name="Sato S."/>
            <person name="Kato T."/>
            <person name="Asamizu E."/>
            <person name="Sasamoto S."/>
            <person name="Kimura T."/>
            <person name="Idesawa K."/>
            <person name="Kawashima K."/>
            <person name="Kishida Y."/>
            <person name="Kiyokawa C."/>
            <person name="Kohara M."/>
            <person name="Matsumoto M."/>
            <person name="Matsuno A."/>
            <person name="Muraki A."/>
            <person name="Nakayama S."/>
            <person name="Nakazaki N."/>
            <person name="Shinpo S."/>
            <person name="Takeuchi C."/>
            <person name="Wada T."/>
            <person name="Watanabe A."/>
            <person name="Yamada M."/>
            <person name="Yasuda M."/>
            <person name="Tabata S."/>
        </authorList>
    </citation>
    <scope>NUCLEOTIDE SEQUENCE [LARGE SCALE GENOMIC DNA]</scope>
    <source>
        <strain>cv. Columbia</strain>
    </source>
</reference>
<reference key="4">
    <citation type="journal article" date="2017" name="Plant J.">
        <title>Araport11: a complete reannotation of the Arabidopsis thaliana reference genome.</title>
        <authorList>
            <person name="Cheng C.Y."/>
            <person name="Krishnakumar V."/>
            <person name="Chan A.P."/>
            <person name="Thibaud-Nissen F."/>
            <person name="Schobel S."/>
            <person name="Town C.D."/>
        </authorList>
    </citation>
    <scope>GENOME REANNOTATION</scope>
    <source>
        <strain>cv. Columbia</strain>
    </source>
</reference>
<reference key="5">
    <citation type="submission" date="2006-04" db="EMBL/GenBank/DDBJ databases">
        <title>Arabidopsis ORF clones.</title>
        <authorList>
            <person name="Shinn P."/>
            <person name="Chen H."/>
            <person name="Kim C.J."/>
            <person name="Ecker J.R."/>
        </authorList>
    </citation>
    <scope>NUCLEOTIDE SEQUENCE [LARGE SCALE MRNA]</scope>
    <source>
        <strain>cv. Columbia</strain>
    </source>
</reference>
<reference key="6">
    <citation type="journal article" date="2002" name="Plant Cell Physiol.">
        <title>The ASYMMETRIC LEAVES2 gene of Arabidopsis thaliana, required for formation of a symmetric flat leaf lamina, encodes a member of a novel family of proteins characterized by cysteine repeats and a leucine zipper.</title>
        <authorList>
            <person name="Iwakawa H."/>
            <person name="Ueno Y."/>
            <person name="Semiarti E."/>
            <person name="Onouchi H."/>
            <person name="Kojima S."/>
            <person name="Tsukaya H."/>
            <person name="Hasebe M."/>
            <person name="Soma T."/>
            <person name="Ikezaki M."/>
            <person name="Machida C."/>
            <person name="Machida Y."/>
        </authorList>
    </citation>
    <scope>GENE FAMILY</scope>
    <scope>NOMENCLATURE</scope>
</reference>
<reference key="7">
    <citation type="journal article" date="2005" name="Plant Cell">
        <title>Functional genomic analysis of the AUXIN RESPONSE FACTOR gene family members in Arabidopsis thaliana: unique and overlapping functions of ARF7 and ARF19.</title>
        <authorList>
            <person name="Okushima Y."/>
            <person name="Overvoorde P.J."/>
            <person name="Arima K."/>
            <person name="Alonso J.M."/>
            <person name="Chan A."/>
            <person name="Chang C."/>
            <person name="Ecker J.R."/>
            <person name="Hughes B."/>
            <person name="Lui A."/>
            <person name="Nguyen D."/>
            <person name="Onodera C."/>
            <person name="Quach H."/>
            <person name="Smith A."/>
            <person name="Yu G."/>
            <person name="Theologis A."/>
        </authorList>
    </citation>
    <scope>INDUCTION BY AUXIN</scope>
</reference>
<reference key="8">
    <citation type="journal article" date="2007" name="Plant Cell">
        <title>ARF7 and ARF19 regulate lateral root formation via direct activation of LBD/ASL genes in Arabidopsis.</title>
        <authorList>
            <person name="Okushima Y."/>
            <person name="Fukaki H."/>
            <person name="Onoda M."/>
            <person name="Theologis A."/>
            <person name="Tasaka M."/>
        </authorList>
    </citation>
    <scope>FUNCTION</scope>
    <scope>INDUCTION BY AUXIN</scope>
</reference>
<organism>
    <name type="scientific">Arabidopsis thaliana</name>
    <name type="common">Mouse-ear cress</name>
    <dbReference type="NCBI Taxonomy" id="3702"/>
    <lineage>
        <taxon>Eukaryota</taxon>
        <taxon>Viridiplantae</taxon>
        <taxon>Streptophyta</taxon>
        <taxon>Embryophyta</taxon>
        <taxon>Tracheophyta</taxon>
        <taxon>Spermatophyta</taxon>
        <taxon>Magnoliopsida</taxon>
        <taxon>eudicotyledons</taxon>
        <taxon>Gunneridae</taxon>
        <taxon>Pentapetalae</taxon>
        <taxon>rosids</taxon>
        <taxon>malvids</taxon>
        <taxon>Brassicales</taxon>
        <taxon>Brassicaceae</taxon>
        <taxon>Camelineae</taxon>
        <taxon>Arabidopsis</taxon>
    </lineage>
</organism>
<evidence type="ECO:0000255" key="1">
    <source>
        <dbReference type="PROSITE-ProRule" id="PRU00291"/>
    </source>
</evidence>
<evidence type="ECO:0000269" key="2">
    <source>
    </source>
</evidence>
<evidence type="ECO:0000269" key="3">
    <source>
    </source>
</evidence>
<evidence type="ECO:0000269" key="4">
    <source>
    </source>
</evidence>
<evidence type="ECO:0000305" key="5"/>
<accession>Q9M2J7</accession>
<accession>B7XG70</accession>
<accession>Q1LYU4</accession>
<keyword id="KW-1185">Reference proteome</keyword>
<feature type="chain" id="PRO_0000132280" description="LOB domain-containing protein 29">
    <location>
        <begin position="1"/>
        <end position="218"/>
    </location>
</feature>
<feature type="domain" description="LOB" evidence="1">
    <location>
        <begin position="10"/>
        <end position="112"/>
    </location>
</feature>
<dbReference type="EMBL" id="AF447893">
    <property type="protein sequence ID" value="AAL38038.1"/>
    <property type="molecule type" value="mRNA"/>
</dbReference>
<dbReference type="EMBL" id="AB473849">
    <property type="protein sequence ID" value="BAH10560.1"/>
    <property type="molecule type" value="mRNA"/>
</dbReference>
<dbReference type="EMBL" id="AL137081">
    <property type="protein sequence ID" value="CAB68157.1"/>
    <property type="molecule type" value="Genomic_DNA"/>
</dbReference>
<dbReference type="EMBL" id="CP002686">
    <property type="protein sequence ID" value="AEE79752.1"/>
    <property type="molecule type" value="Genomic_DNA"/>
</dbReference>
<dbReference type="EMBL" id="BT025282">
    <property type="protein sequence ID" value="ABF19035.1"/>
    <property type="molecule type" value="mRNA"/>
</dbReference>
<dbReference type="PIR" id="T45979">
    <property type="entry name" value="T45979"/>
</dbReference>
<dbReference type="RefSeq" id="NP_191378.1">
    <property type="nucleotide sequence ID" value="NM_115681.3"/>
</dbReference>
<dbReference type="SMR" id="Q9M2J7"/>
<dbReference type="BioGRID" id="10303">
    <property type="interactions" value="3"/>
</dbReference>
<dbReference type="STRING" id="3702.Q9M2J7"/>
<dbReference type="PaxDb" id="3702-AT3G58190.1"/>
<dbReference type="EnsemblPlants" id="AT3G58190.1">
    <property type="protein sequence ID" value="AT3G58190.1"/>
    <property type="gene ID" value="AT3G58190"/>
</dbReference>
<dbReference type="GeneID" id="824988"/>
<dbReference type="Gramene" id="AT3G58190.1">
    <property type="protein sequence ID" value="AT3G58190.1"/>
    <property type="gene ID" value="AT3G58190"/>
</dbReference>
<dbReference type="KEGG" id="ath:AT3G58190"/>
<dbReference type="Araport" id="AT3G58190"/>
<dbReference type="TAIR" id="AT3G58190">
    <property type="gene designation" value="LBD29"/>
</dbReference>
<dbReference type="eggNOG" id="ENOG502QUV3">
    <property type="taxonomic scope" value="Eukaryota"/>
</dbReference>
<dbReference type="HOGENOM" id="CLU_058353_3_1_1"/>
<dbReference type="InParanoid" id="Q9M2J7"/>
<dbReference type="OMA" id="HHHDQTH"/>
<dbReference type="OrthoDB" id="668748at2759"/>
<dbReference type="PhylomeDB" id="Q9M2J7"/>
<dbReference type="PRO" id="PR:Q9M2J7"/>
<dbReference type="Proteomes" id="UP000006548">
    <property type="component" value="Chromosome 3"/>
</dbReference>
<dbReference type="ExpressionAtlas" id="Q9M2J7">
    <property type="expression patterns" value="baseline and differential"/>
</dbReference>
<dbReference type="GO" id="GO:0005634">
    <property type="term" value="C:nucleus"/>
    <property type="evidence" value="ECO:0000314"/>
    <property type="project" value="TAIR"/>
</dbReference>
<dbReference type="GO" id="GO:1990110">
    <property type="term" value="P:callus formation"/>
    <property type="evidence" value="ECO:0000315"/>
    <property type="project" value="TAIR"/>
</dbReference>
<dbReference type="GO" id="GO:0010311">
    <property type="term" value="P:lateral root formation"/>
    <property type="evidence" value="ECO:0000315"/>
    <property type="project" value="TAIR"/>
</dbReference>
<dbReference type="InterPro" id="IPR004883">
    <property type="entry name" value="LOB"/>
</dbReference>
<dbReference type="PANTHER" id="PTHR31529">
    <property type="entry name" value="LOB DOMAIN CONTAINING PROTEIN"/>
    <property type="match status" value="1"/>
</dbReference>
<dbReference type="PANTHER" id="PTHR31529:SF57">
    <property type="entry name" value="LOB DOMAIN-CONTAINING PROTEIN 29"/>
    <property type="match status" value="1"/>
</dbReference>
<dbReference type="Pfam" id="PF03195">
    <property type="entry name" value="LOB"/>
    <property type="match status" value="1"/>
</dbReference>
<dbReference type="PROSITE" id="PS50891">
    <property type="entry name" value="LOB"/>
    <property type="match status" value="1"/>
</dbReference>
<gene>
    <name type="primary">LBD29</name>
    <name type="synonym">ASL16</name>
    <name type="ordered locus">At3g58190</name>
    <name type="ORF">F9D24.100</name>
</gene>
<comment type="function">
    <text evidence="4">Involved in lateral root formation. Regulated by the transcriptional activators ARF7 and ARF19.</text>
</comment>
<comment type="tissue specificity">
    <text evidence="2">Expressed in roots.</text>
</comment>
<comment type="induction">
    <text evidence="3 4">By auxin.</text>
</comment>
<comment type="similarity">
    <text evidence="5">Belongs to the LOB domain-containing protein family.</text>
</comment>
<sequence length="218" mass="24056">MTSSSSSSGSPCGACKFLRRKCAKGCVFAPYFCHEQGASHFAAIHKVFGASNASKLLSHLPISDRCEAAITISYEAQARLQDPIYGCVSHIFALQQQVVNLQAELEILKQQAAQSMIFADSPTSENPNSYYGDTTKAPYHHDHQNIYHHHDQTHLVYQTGSSGTVQHGDATESSYHNETSSGMGEFSIYSDLEQHLNTFNQDHLKELQSANFGYISFS</sequence>